<dbReference type="EMBL" id="GG704911">
    <property type="protein sequence ID" value="EAS34785.1"/>
    <property type="molecule type" value="Genomic_DNA"/>
</dbReference>
<dbReference type="RefSeq" id="XP_001246368.1">
    <property type="nucleotide sequence ID" value="XM_001246367.2"/>
</dbReference>
<dbReference type="SMR" id="Q1EBC4"/>
<dbReference type="FunCoup" id="Q1EBC4">
    <property type="interactions" value="246"/>
</dbReference>
<dbReference type="STRING" id="246410.Q1EBC4"/>
<dbReference type="GeneID" id="4566384"/>
<dbReference type="KEGG" id="cim:CIMG_00139"/>
<dbReference type="VEuPathDB" id="FungiDB:CIMG_00139"/>
<dbReference type="InParanoid" id="Q1EBC4"/>
<dbReference type="OMA" id="MQQTEAD"/>
<dbReference type="OrthoDB" id="285729at2759"/>
<dbReference type="Proteomes" id="UP000001261">
    <property type="component" value="Unassembled WGS sequence"/>
</dbReference>
<dbReference type="GO" id="GO:0005730">
    <property type="term" value="C:nucleolus"/>
    <property type="evidence" value="ECO:0007669"/>
    <property type="project" value="UniProtKB-SubCell"/>
</dbReference>
<dbReference type="GO" id="GO:1990904">
    <property type="term" value="C:ribonucleoprotein complex"/>
    <property type="evidence" value="ECO:0007669"/>
    <property type="project" value="UniProtKB-KW"/>
</dbReference>
<dbReference type="GO" id="GO:0042273">
    <property type="term" value="P:ribosomal large subunit biogenesis"/>
    <property type="evidence" value="ECO:0007669"/>
    <property type="project" value="TreeGrafter"/>
</dbReference>
<dbReference type="GO" id="GO:0006364">
    <property type="term" value="P:rRNA processing"/>
    <property type="evidence" value="ECO:0007669"/>
    <property type="project" value="UniProtKB-KW"/>
</dbReference>
<dbReference type="InterPro" id="IPR019002">
    <property type="entry name" value="Ribosome_biogenesis_Nop16"/>
</dbReference>
<dbReference type="PANTHER" id="PTHR13243">
    <property type="entry name" value="HSPC111 PROTEIN-RELATED"/>
    <property type="match status" value="1"/>
</dbReference>
<dbReference type="PANTHER" id="PTHR13243:SF1">
    <property type="entry name" value="NUCLEOLAR PROTEIN 16"/>
    <property type="match status" value="1"/>
</dbReference>
<dbReference type="Pfam" id="PF09420">
    <property type="entry name" value="Nop16"/>
    <property type="match status" value="1"/>
</dbReference>
<name>NOP16_COCIM</name>
<sequence>MGRVLQKKKNRSSAPKIKIKSGKSKSGKKKINVLGNSIIAQNWDKKLTLAQNYRRLGLATRLNAPTGGVEKGVSAGALNNISSLATKGKTAAQIQPSEARVERDPETGKILRIIQPDQAGDDGTIEVAGHKRRRTNPLDDPLNELSDVEDSTLRDTGASTDVVSALERQAAAEEERVKKRKPRHQSKREEEWLQRLVDKYGDDVPAMVRDRKLNPMQQTEGDIRRRLRKWHGNKK</sequence>
<keyword id="KW-0539">Nucleus</keyword>
<keyword id="KW-1185">Reference proteome</keyword>
<keyword id="KW-0687">Ribonucleoprotein</keyword>
<keyword id="KW-0690">Ribosome biogenesis</keyword>
<keyword id="KW-0698">rRNA processing</keyword>
<protein>
    <recommendedName>
        <fullName>Nucleolar protein 16</fullName>
    </recommendedName>
</protein>
<evidence type="ECO:0000250" key="1"/>
<evidence type="ECO:0000256" key="2">
    <source>
        <dbReference type="SAM" id="MobiDB-lite"/>
    </source>
</evidence>
<evidence type="ECO:0000305" key="3"/>
<proteinExistence type="inferred from homology"/>
<organism>
    <name type="scientific">Coccidioides immitis (strain RS)</name>
    <name type="common">Valley fever fungus</name>
    <dbReference type="NCBI Taxonomy" id="246410"/>
    <lineage>
        <taxon>Eukaryota</taxon>
        <taxon>Fungi</taxon>
        <taxon>Dikarya</taxon>
        <taxon>Ascomycota</taxon>
        <taxon>Pezizomycotina</taxon>
        <taxon>Eurotiomycetes</taxon>
        <taxon>Eurotiomycetidae</taxon>
        <taxon>Onygenales</taxon>
        <taxon>Onygenaceae</taxon>
        <taxon>Coccidioides</taxon>
    </lineage>
</organism>
<gene>
    <name type="primary">NOP16</name>
    <name type="ORF">CIMG_00139</name>
</gene>
<feature type="chain" id="PRO_0000320373" description="Nucleolar protein 16">
    <location>
        <begin position="1"/>
        <end position="235"/>
    </location>
</feature>
<feature type="region of interest" description="Disordered" evidence="2">
    <location>
        <begin position="1"/>
        <end position="28"/>
    </location>
</feature>
<feature type="region of interest" description="Disordered" evidence="2">
    <location>
        <begin position="120"/>
        <end position="189"/>
    </location>
</feature>
<feature type="region of interest" description="Disordered" evidence="2">
    <location>
        <begin position="211"/>
        <end position="235"/>
    </location>
</feature>
<feature type="compositionally biased region" description="Basic residues" evidence="2">
    <location>
        <begin position="225"/>
        <end position="235"/>
    </location>
</feature>
<accession>Q1EBC4</accession>
<accession>A0A0D6K9P7</accession>
<accession>J3KGB1</accession>
<comment type="function">
    <text evidence="1">Involved in the biogenesis of the 60S ribosomal subunit.</text>
</comment>
<comment type="subunit">
    <text evidence="1">Component of the pre-66S ribosomal particle.</text>
</comment>
<comment type="subcellular location">
    <subcellularLocation>
        <location evidence="1">Nucleus</location>
        <location evidence="1">Nucleolus</location>
    </subcellularLocation>
</comment>
<comment type="similarity">
    <text evidence="3">Belongs to the NOP16 family.</text>
</comment>
<reference key="1">
    <citation type="journal article" date="2009" name="Genome Res.">
        <title>Comparative genomic analyses of the human fungal pathogens Coccidioides and their relatives.</title>
        <authorList>
            <person name="Sharpton T.J."/>
            <person name="Stajich J.E."/>
            <person name="Rounsley S.D."/>
            <person name="Gardner M.J."/>
            <person name="Wortman J.R."/>
            <person name="Jordar V.S."/>
            <person name="Maiti R."/>
            <person name="Kodira C.D."/>
            <person name="Neafsey D.E."/>
            <person name="Zeng Q."/>
            <person name="Hung C.-Y."/>
            <person name="McMahan C."/>
            <person name="Muszewska A."/>
            <person name="Grynberg M."/>
            <person name="Mandel M.A."/>
            <person name="Kellner E.M."/>
            <person name="Barker B.M."/>
            <person name="Galgiani J.N."/>
            <person name="Orbach M.J."/>
            <person name="Kirkland T.N."/>
            <person name="Cole G.T."/>
            <person name="Henn M.R."/>
            <person name="Birren B.W."/>
            <person name="Taylor J.W."/>
        </authorList>
    </citation>
    <scope>NUCLEOTIDE SEQUENCE [LARGE SCALE GENOMIC DNA]</scope>
    <source>
        <strain>RS</strain>
    </source>
</reference>
<reference key="2">
    <citation type="journal article" date="2010" name="Genome Res.">
        <title>Population genomic sequencing of Coccidioides fungi reveals recent hybridization and transposon control.</title>
        <authorList>
            <person name="Neafsey D.E."/>
            <person name="Barker B.M."/>
            <person name="Sharpton T.J."/>
            <person name="Stajich J.E."/>
            <person name="Park D.J."/>
            <person name="Whiston E."/>
            <person name="Hung C.-Y."/>
            <person name="McMahan C."/>
            <person name="White J."/>
            <person name="Sykes S."/>
            <person name="Heiman D."/>
            <person name="Young S."/>
            <person name="Zeng Q."/>
            <person name="Abouelleil A."/>
            <person name="Aftuck L."/>
            <person name="Bessette D."/>
            <person name="Brown A."/>
            <person name="FitzGerald M."/>
            <person name="Lui A."/>
            <person name="Macdonald J.P."/>
            <person name="Priest M."/>
            <person name="Orbach M.J."/>
            <person name="Galgiani J.N."/>
            <person name="Kirkland T.N."/>
            <person name="Cole G.T."/>
            <person name="Birren B.W."/>
            <person name="Henn M.R."/>
            <person name="Taylor J.W."/>
            <person name="Rounsley S.D."/>
        </authorList>
    </citation>
    <scope>GENOME REANNOTATION</scope>
    <source>
        <strain>RS</strain>
    </source>
</reference>